<accession>Q9U5D2</accession>
<accession>P81681</accession>
<comment type="function">
    <text>Hormone found in the sinus gland of isopods and decapods which controls the blood sugar level. Has a secretagogue action over the amylase released from the midgut gland. May act as a stress hormone and may be involved in the control of molting and reproduction.</text>
</comment>
<comment type="subcellular location">
    <subcellularLocation>
        <location>Secreted</location>
    </subcellularLocation>
</comment>
<comment type="similarity">
    <text evidence="4">Belongs to the arthropod CHH/MIH/GIH/VIH hormone family.</text>
</comment>
<evidence type="ECO:0000250" key="1"/>
<evidence type="ECO:0000255" key="2"/>
<evidence type="ECO:0000269" key="3">
    <source>
    </source>
</evidence>
<evidence type="ECO:0000305" key="4"/>
<sequence>MIAFHMVWSALLASLLLLLLAPSASPVDAFSPPEASLTGGQSLSKRSLFDPSCTGVFDRQLLRRLGRVCDDCFNVFREPNVAMECRSNCYNNPVFRQCMEYLLPAHLHDEYRLAVQMVGK</sequence>
<dbReference type="EMBL" id="AB035724">
    <property type="protein sequence ID" value="BAA88339.1"/>
    <property type="molecule type" value="mRNA"/>
</dbReference>
<dbReference type="SMR" id="Q9U5D2"/>
<dbReference type="OrthoDB" id="6330469at2759"/>
<dbReference type="GO" id="GO:0005576">
    <property type="term" value="C:extracellular region"/>
    <property type="evidence" value="ECO:0007669"/>
    <property type="project" value="UniProtKB-SubCell"/>
</dbReference>
<dbReference type="GO" id="GO:0005184">
    <property type="term" value="F:neuropeptide hormone activity"/>
    <property type="evidence" value="ECO:0007669"/>
    <property type="project" value="InterPro"/>
</dbReference>
<dbReference type="GO" id="GO:0007623">
    <property type="term" value="P:circadian rhythm"/>
    <property type="evidence" value="ECO:0007669"/>
    <property type="project" value="TreeGrafter"/>
</dbReference>
<dbReference type="GO" id="GO:0006006">
    <property type="term" value="P:glucose metabolic process"/>
    <property type="evidence" value="ECO:0007669"/>
    <property type="project" value="UniProtKB-KW"/>
</dbReference>
<dbReference type="GO" id="GO:0007218">
    <property type="term" value="P:neuropeptide signaling pathway"/>
    <property type="evidence" value="ECO:0007669"/>
    <property type="project" value="UniProtKB-KW"/>
</dbReference>
<dbReference type="Gene3D" id="1.10.2010.10">
    <property type="entry name" value="Crustacean CHH/MIH/GIH neurohormone"/>
    <property type="match status" value="1"/>
</dbReference>
<dbReference type="InterPro" id="IPR018251">
    <property type="entry name" value="Crust_neurhormone_CS"/>
</dbReference>
<dbReference type="InterPro" id="IPR031098">
    <property type="entry name" value="Crust_neurohorm"/>
</dbReference>
<dbReference type="InterPro" id="IPR035957">
    <property type="entry name" value="Crust_neurohorm_sf"/>
</dbReference>
<dbReference type="InterPro" id="IPR001166">
    <property type="entry name" value="Hyperglycemic"/>
</dbReference>
<dbReference type="InterPro" id="IPR000346">
    <property type="entry name" value="Hyperglycemic1"/>
</dbReference>
<dbReference type="PANTHER" id="PTHR35981">
    <property type="entry name" value="ION TRANSPORT PEPTIDE, ISOFORM C"/>
    <property type="match status" value="1"/>
</dbReference>
<dbReference type="PANTHER" id="PTHR35981:SF2">
    <property type="entry name" value="ION TRANSPORT PEPTIDE, ISOFORM C"/>
    <property type="match status" value="1"/>
</dbReference>
<dbReference type="Pfam" id="PF01147">
    <property type="entry name" value="Crust_neurohorm"/>
    <property type="match status" value="1"/>
</dbReference>
<dbReference type="PRINTS" id="PR00548">
    <property type="entry name" value="HYPRGLYCEMC1"/>
</dbReference>
<dbReference type="PRINTS" id="PR00550">
    <property type="entry name" value="HYPRGLYCEMIC"/>
</dbReference>
<dbReference type="SUPFAM" id="SSF81778">
    <property type="entry name" value="Crustacean CHH/MIH/GIH neurohormone"/>
    <property type="match status" value="1"/>
</dbReference>
<dbReference type="PROSITE" id="PS01250">
    <property type="entry name" value="CHH_MIH_GIH"/>
    <property type="match status" value="1"/>
</dbReference>
<feature type="signal peptide" evidence="2">
    <location>
        <begin position="1"/>
        <end position="27"/>
    </location>
</feature>
<feature type="peptide" id="PRO_0000019053" description="CHH precursor-related peptide 2">
    <location>
        <begin position="28"/>
        <end position="44"/>
    </location>
</feature>
<feature type="peptide" id="PRO_0000019054" description="Crustacean hyperglycemic hormone 2">
    <location>
        <begin position="47"/>
        <end position="118"/>
    </location>
</feature>
<feature type="modified residue" description="Valine amide" evidence="3">
    <location>
        <position position="118"/>
    </location>
</feature>
<feature type="disulfide bond" evidence="1">
    <location>
        <begin position="53"/>
        <end position="89"/>
    </location>
</feature>
<feature type="disulfide bond" evidence="1">
    <location>
        <begin position="69"/>
        <end position="85"/>
    </location>
</feature>
<feature type="disulfide bond" evidence="1">
    <location>
        <begin position="72"/>
        <end position="98"/>
    </location>
</feature>
<keyword id="KW-0027">Amidation</keyword>
<keyword id="KW-0119">Carbohydrate metabolism</keyword>
<keyword id="KW-0165">Cleavage on pair of basic residues</keyword>
<keyword id="KW-0903">Direct protein sequencing</keyword>
<keyword id="KW-1015">Disulfide bond</keyword>
<keyword id="KW-0313">Glucose metabolism</keyword>
<keyword id="KW-0372">Hormone</keyword>
<keyword id="KW-0527">Neuropeptide</keyword>
<keyword id="KW-0964">Secreted</keyword>
<keyword id="KW-0732">Signal</keyword>
<proteinExistence type="evidence at protein level"/>
<reference key="1">
    <citation type="submission" date="1999-12" db="EMBL/GenBank/DDBJ databases">
        <title>Crustacean hyperglycemic hormone of kuruma prawn Penaeus japonicus.</title>
        <authorList>
            <person name="Ohira T."/>
            <person name="Watanabe T."/>
            <person name="Aida K."/>
            <person name="Nagasawa H."/>
        </authorList>
    </citation>
    <scope>NUCLEOTIDE SEQUENCE [MRNA]</scope>
    <source>
        <tissue>Eyestalk</tissue>
    </source>
</reference>
<reference key="2">
    <citation type="journal article" date="1997" name="Peptides">
        <title>Amino acid sequences and activities of multiple hyperglycemic hormones from the kuruma prawn, Penaeus japonicus.</title>
        <authorList>
            <person name="Yang W.-J."/>
            <person name="Aida K."/>
            <person name="Nagasawa H."/>
        </authorList>
    </citation>
    <scope>PROTEIN SEQUENCE OF 47-118</scope>
    <scope>AMIDATION AT VAL-118</scope>
    <source>
        <tissue>Sinus gland</tissue>
    </source>
</reference>
<name>CHH2_PENJP</name>
<organism>
    <name type="scientific">Penaeus japonicus</name>
    <name type="common">Kuruma prawn</name>
    <name type="synonym">Marsupenaeus japonicus</name>
    <dbReference type="NCBI Taxonomy" id="27405"/>
    <lineage>
        <taxon>Eukaryota</taxon>
        <taxon>Metazoa</taxon>
        <taxon>Ecdysozoa</taxon>
        <taxon>Arthropoda</taxon>
        <taxon>Crustacea</taxon>
        <taxon>Multicrustacea</taxon>
        <taxon>Malacostraca</taxon>
        <taxon>Eumalacostraca</taxon>
        <taxon>Eucarida</taxon>
        <taxon>Decapoda</taxon>
        <taxon>Dendrobranchiata</taxon>
        <taxon>Penaeoidea</taxon>
        <taxon>Penaeidae</taxon>
        <taxon>Penaeus</taxon>
    </lineage>
</organism>
<protein>
    <recommendedName>
        <fullName>Crustacean hyperglycemic hormones 2</fullName>
    </recommendedName>
    <alternativeName>
        <fullName>Pej-SGP-II</fullName>
    </alternativeName>
    <component>
        <recommendedName>
            <fullName>CHH precursor-related peptide 2</fullName>
            <shortName>CPRP 2</shortName>
        </recommendedName>
    </component>
    <component>
        <recommendedName>
            <fullName>Crustacean hyperglycemic hormone 2</fullName>
            <shortName>CHH 2</shortName>
        </recommendedName>
    </component>
</protein>